<gene>
    <name evidence="1" type="primary">nnrE</name>
    <name type="ordered locus">AXYL_01760</name>
</gene>
<organism>
    <name type="scientific">Achromobacter xylosoxidans (strain A8)</name>
    <dbReference type="NCBI Taxonomy" id="762376"/>
    <lineage>
        <taxon>Bacteria</taxon>
        <taxon>Pseudomonadati</taxon>
        <taxon>Pseudomonadota</taxon>
        <taxon>Betaproteobacteria</taxon>
        <taxon>Burkholderiales</taxon>
        <taxon>Alcaligenaceae</taxon>
        <taxon>Achromobacter</taxon>
    </lineage>
</organism>
<evidence type="ECO:0000255" key="1">
    <source>
        <dbReference type="HAMAP-Rule" id="MF_01966"/>
    </source>
</evidence>
<feature type="chain" id="PRO_0000416342" description="NAD(P)H-hydrate epimerase">
    <location>
        <begin position="1"/>
        <end position="208"/>
    </location>
</feature>
<feature type="domain" description="YjeF N-terminal" evidence="1">
    <location>
        <begin position="10"/>
        <end position="208"/>
    </location>
</feature>
<feature type="binding site" evidence="1">
    <location>
        <begin position="54"/>
        <end position="58"/>
    </location>
    <ligand>
        <name>(6S)-NADPHX</name>
        <dbReference type="ChEBI" id="CHEBI:64076"/>
    </ligand>
</feature>
<feature type="binding site" evidence="1">
    <location>
        <position position="55"/>
    </location>
    <ligand>
        <name>K(+)</name>
        <dbReference type="ChEBI" id="CHEBI:29103"/>
    </ligand>
</feature>
<feature type="binding site" evidence="1">
    <location>
        <position position="117"/>
    </location>
    <ligand>
        <name>K(+)</name>
        <dbReference type="ChEBI" id="CHEBI:29103"/>
    </ligand>
</feature>
<feature type="binding site" evidence="1">
    <location>
        <begin position="121"/>
        <end position="127"/>
    </location>
    <ligand>
        <name>(6S)-NADPHX</name>
        <dbReference type="ChEBI" id="CHEBI:64076"/>
    </ligand>
</feature>
<feature type="binding site" evidence="1">
    <location>
        <position position="150"/>
    </location>
    <ligand>
        <name>(6S)-NADPHX</name>
        <dbReference type="ChEBI" id="CHEBI:64076"/>
    </ligand>
</feature>
<feature type="binding site" evidence="1">
    <location>
        <position position="153"/>
    </location>
    <ligand>
        <name>K(+)</name>
        <dbReference type="ChEBI" id="CHEBI:29103"/>
    </ligand>
</feature>
<comment type="function">
    <text evidence="1">Catalyzes the epimerization of the S- and R-forms of NAD(P)HX, a damaged form of NAD(P)H that is a result of enzymatic or heat-dependent hydration. This is a prerequisite for the S-specific NAD(P)H-hydrate dehydratase to allow the repair of both epimers of NAD(P)HX.</text>
</comment>
<comment type="catalytic activity">
    <reaction evidence="1">
        <text>(6R)-NADHX = (6S)-NADHX</text>
        <dbReference type="Rhea" id="RHEA:32215"/>
        <dbReference type="ChEBI" id="CHEBI:64074"/>
        <dbReference type="ChEBI" id="CHEBI:64075"/>
        <dbReference type="EC" id="5.1.99.6"/>
    </reaction>
</comment>
<comment type="catalytic activity">
    <reaction evidence="1">
        <text>(6R)-NADPHX = (6S)-NADPHX</text>
        <dbReference type="Rhea" id="RHEA:32227"/>
        <dbReference type="ChEBI" id="CHEBI:64076"/>
        <dbReference type="ChEBI" id="CHEBI:64077"/>
        <dbReference type="EC" id="5.1.99.6"/>
    </reaction>
</comment>
<comment type="cofactor">
    <cofactor evidence="1">
        <name>K(+)</name>
        <dbReference type="ChEBI" id="CHEBI:29103"/>
    </cofactor>
    <text evidence="1">Binds 1 potassium ion per subunit.</text>
</comment>
<comment type="similarity">
    <text evidence="1">Belongs to the NnrE/AIBP family.</text>
</comment>
<accession>E3HVU4</accession>
<reference key="1">
    <citation type="journal article" date="2011" name="J. Bacteriol.">
        <title>Complete genome sequence of the haloaromatic acid-degrading bacterium Achromobacter xylosoxidans A8.</title>
        <authorList>
            <person name="Strnad H."/>
            <person name="Ridl J."/>
            <person name="Paces J."/>
            <person name="Kolar M."/>
            <person name="Vlcek C."/>
            <person name="Paces V."/>
        </authorList>
    </citation>
    <scope>NUCLEOTIDE SEQUENCE [LARGE SCALE GENOMIC DNA]</scope>
    <source>
        <strain>A8</strain>
    </source>
</reference>
<name>NNRE_ACHXA</name>
<protein>
    <recommendedName>
        <fullName evidence="1">NAD(P)H-hydrate epimerase</fullName>
        <ecNumber evidence="1">5.1.99.6</ecNumber>
    </recommendedName>
    <alternativeName>
        <fullName evidence="1">NAD(P)HX epimerase</fullName>
    </alternativeName>
</protein>
<keyword id="KW-0413">Isomerase</keyword>
<keyword id="KW-0479">Metal-binding</keyword>
<keyword id="KW-0520">NAD</keyword>
<keyword id="KW-0521">NADP</keyword>
<keyword id="KW-0547">Nucleotide-binding</keyword>
<keyword id="KW-0630">Potassium</keyword>
<dbReference type="EC" id="5.1.99.6" evidence="1"/>
<dbReference type="EMBL" id="CP002287">
    <property type="protein sequence ID" value="ADP15097.1"/>
    <property type="molecule type" value="Genomic_DNA"/>
</dbReference>
<dbReference type="RefSeq" id="WP_013392435.1">
    <property type="nucleotide sequence ID" value="NC_014640.1"/>
</dbReference>
<dbReference type="SMR" id="E3HVU4"/>
<dbReference type="STRING" id="762376.AXYL_01760"/>
<dbReference type="KEGG" id="axy:AXYL_01760"/>
<dbReference type="PATRIC" id="fig|762376.5.peg.1757"/>
<dbReference type="eggNOG" id="COG0062">
    <property type="taxonomic scope" value="Bacteria"/>
</dbReference>
<dbReference type="HOGENOM" id="CLU_024853_0_2_4"/>
<dbReference type="OrthoDB" id="9806925at2"/>
<dbReference type="Proteomes" id="UP000006876">
    <property type="component" value="Chromosome"/>
</dbReference>
<dbReference type="GO" id="GO:0046872">
    <property type="term" value="F:metal ion binding"/>
    <property type="evidence" value="ECO:0007669"/>
    <property type="project" value="UniProtKB-KW"/>
</dbReference>
<dbReference type="GO" id="GO:0052856">
    <property type="term" value="F:NAD(P)HX epimerase activity"/>
    <property type="evidence" value="ECO:0007669"/>
    <property type="project" value="UniProtKB-UniRule"/>
</dbReference>
<dbReference type="GO" id="GO:0000166">
    <property type="term" value="F:nucleotide binding"/>
    <property type="evidence" value="ECO:0007669"/>
    <property type="project" value="UniProtKB-KW"/>
</dbReference>
<dbReference type="Gene3D" id="3.40.50.10260">
    <property type="entry name" value="YjeF N-terminal domain"/>
    <property type="match status" value="1"/>
</dbReference>
<dbReference type="HAMAP" id="MF_01966">
    <property type="entry name" value="NADHX_epimerase"/>
    <property type="match status" value="1"/>
</dbReference>
<dbReference type="InterPro" id="IPR004443">
    <property type="entry name" value="YjeF_N_dom"/>
</dbReference>
<dbReference type="InterPro" id="IPR036652">
    <property type="entry name" value="YjeF_N_dom_sf"/>
</dbReference>
<dbReference type="NCBIfam" id="TIGR00197">
    <property type="entry name" value="yjeF_nterm"/>
    <property type="match status" value="1"/>
</dbReference>
<dbReference type="Pfam" id="PF03853">
    <property type="entry name" value="YjeF_N"/>
    <property type="match status" value="1"/>
</dbReference>
<dbReference type="SUPFAM" id="SSF64153">
    <property type="entry name" value="YjeF N-terminal domain-like"/>
    <property type="match status" value="1"/>
</dbReference>
<dbReference type="PROSITE" id="PS51385">
    <property type="entry name" value="YJEF_N"/>
    <property type="match status" value="1"/>
</dbReference>
<proteinExistence type="inferred from homology"/>
<sequence length="208" mass="21284">MPPSHSVAQIRDAERQTLATGRRLMPLAGAAAARHVAARIRPGAVVLALAGPGNNGGDALEAATGLRAMGHDVRVLLPSGAQGLPADAARAYAGWQAAGGETWSTLEPGFVPGLVIDGLFGIGLNRPLGADWQALVDTVNAWNVPVLALDVPSGIDADSGEALGRPIQARWTLSFIGRARGLERPGPGRDACGISEVDTLGVIMTPAN</sequence>